<gene>
    <name type="primary">bmi1a</name>
    <name type="synonym">bmi1</name>
    <name type="synonym">pcgf4a</name>
    <name type="synonym">psc1</name>
</gene>
<accession>Q8JIR0</accession>
<accession>Q7ZWG4</accession>
<evidence type="ECO:0000250" key="1">
    <source>
        <dbReference type="UniProtKB" id="P35226"/>
    </source>
</evidence>
<evidence type="ECO:0000255" key="2"/>
<evidence type="ECO:0000255" key="3">
    <source>
        <dbReference type="PROSITE-ProRule" id="PRU00175"/>
    </source>
</evidence>
<evidence type="ECO:0000256" key="4">
    <source>
        <dbReference type="SAM" id="MobiDB-lite"/>
    </source>
</evidence>
<evidence type="ECO:0000269" key="5">
    <source>
    </source>
</evidence>
<evidence type="ECO:0000305" key="6"/>
<keyword id="KW-0156">Chromatin regulator</keyword>
<keyword id="KW-0479">Metal-binding</keyword>
<keyword id="KW-0539">Nucleus</keyword>
<keyword id="KW-1185">Reference proteome</keyword>
<keyword id="KW-0678">Repressor</keyword>
<keyword id="KW-0804">Transcription</keyword>
<keyword id="KW-0805">Transcription regulation</keyword>
<keyword id="KW-0862">Zinc</keyword>
<keyword id="KW-0863">Zinc-finger</keyword>
<dbReference type="EMBL" id="AB074153">
    <property type="protein sequence ID" value="BAC01266.1"/>
    <property type="status" value="ALT_INIT"/>
    <property type="molecule type" value="mRNA"/>
</dbReference>
<dbReference type="EMBL" id="BC049423">
    <property type="protein sequence ID" value="AAH49423.1"/>
    <property type="molecule type" value="mRNA"/>
</dbReference>
<dbReference type="RefSeq" id="NP_919347.1">
    <property type="nucleotide sequence ID" value="NM_194366.1"/>
</dbReference>
<dbReference type="SMR" id="Q8JIR0"/>
<dbReference type="BioGRID" id="80329">
    <property type="interactions" value="3"/>
</dbReference>
<dbReference type="FunCoup" id="Q8JIR0">
    <property type="interactions" value="640"/>
</dbReference>
<dbReference type="STRING" id="7955.ENSDARP00000106943"/>
<dbReference type="PaxDb" id="7955-ENSDARP00000106943"/>
<dbReference type="GeneID" id="321505"/>
<dbReference type="KEGG" id="dre:321505"/>
<dbReference type="AGR" id="ZFIN:ZDB-GENE-030131-224"/>
<dbReference type="CTD" id="321505"/>
<dbReference type="ZFIN" id="ZDB-GENE-030131-224">
    <property type="gene designation" value="bmi1a"/>
</dbReference>
<dbReference type="eggNOG" id="KOG2660">
    <property type="taxonomic scope" value="Eukaryota"/>
</dbReference>
<dbReference type="InParanoid" id="Q8JIR0"/>
<dbReference type="OrthoDB" id="1305878at2759"/>
<dbReference type="PhylomeDB" id="Q8JIR0"/>
<dbReference type="TreeFam" id="TF324206"/>
<dbReference type="Reactome" id="R-DRE-2559580">
    <property type="pathway name" value="Oxidative Stress Induced Senescence"/>
</dbReference>
<dbReference type="Reactome" id="R-DRE-3899300">
    <property type="pathway name" value="SUMOylation of transcription cofactors"/>
</dbReference>
<dbReference type="Reactome" id="R-DRE-4570464">
    <property type="pathway name" value="SUMOylation of RNA binding proteins"/>
</dbReference>
<dbReference type="ChiTaRS" id="bmi1a">
    <property type="organism name" value="zebrafish"/>
</dbReference>
<dbReference type="PRO" id="PR:Q8JIR0"/>
<dbReference type="Proteomes" id="UP000000437">
    <property type="component" value="Chromosome 24"/>
</dbReference>
<dbReference type="GO" id="GO:0031519">
    <property type="term" value="C:PcG protein complex"/>
    <property type="evidence" value="ECO:0000250"/>
    <property type="project" value="UniProtKB"/>
</dbReference>
<dbReference type="GO" id="GO:0035102">
    <property type="term" value="C:PRC1 complex"/>
    <property type="evidence" value="ECO:0000318"/>
    <property type="project" value="GO_Central"/>
</dbReference>
<dbReference type="GO" id="GO:1990841">
    <property type="term" value="F:promoter-specific chromatin binding"/>
    <property type="evidence" value="ECO:0000250"/>
    <property type="project" value="UniProtKB"/>
</dbReference>
<dbReference type="GO" id="GO:0008270">
    <property type="term" value="F:zinc ion binding"/>
    <property type="evidence" value="ECO:0007669"/>
    <property type="project" value="UniProtKB-KW"/>
</dbReference>
<dbReference type="GO" id="GO:0021549">
    <property type="term" value="P:cerebellum development"/>
    <property type="evidence" value="ECO:0000316"/>
    <property type="project" value="ZFIN"/>
</dbReference>
<dbReference type="GO" id="GO:0006338">
    <property type="term" value="P:chromatin remodeling"/>
    <property type="evidence" value="ECO:0000250"/>
    <property type="project" value="UniProtKB"/>
</dbReference>
<dbReference type="GO" id="GO:0035701">
    <property type="term" value="P:hematopoietic stem cell migration"/>
    <property type="evidence" value="ECO:0000315"/>
    <property type="project" value="ZFIN"/>
</dbReference>
<dbReference type="GO" id="GO:0045814">
    <property type="term" value="P:negative regulation of gene expression, epigenetic"/>
    <property type="evidence" value="ECO:0000250"/>
    <property type="project" value="UniProtKB"/>
</dbReference>
<dbReference type="GO" id="GO:0000122">
    <property type="term" value="P:negative regulation of transcription by RNA polymerase II"/>
    <property type="evidence" value="ECO:0000318"/>
    <property type="project" value="GO_Central"/>
</dbReference>
<dbReference type="GO" id="GO:0060215">
    <property type="term" value="P:primitive hemopoiesis"/>
    <property type="evidence" value="ECO:0000315"/>
    <property type="project" value="ZFIN"/>
</dbReference>
<dbReference type="CDD" id="cd17165">
    <property type="entry name" value="RAWUL_PCGF4"/>
    <property type="match status" value="1"/>
</dbReference>
<dbReference type="CDD" id="cd16736">
    <property type="entry name" value="RING-HC_PCGF4"/>
    <property type="match status" value="1"/>
</dbReference>
<dbReference type="FunFam" id="3.10.20.90:FF:000106">
    <property type="entry name" value="Polycomb complex protein BMI-1"/>
    <property type="match status" value="1"/>
</dbReference>
<dbReference type="FunFam" id="3.30.40.10:FF:000082">
    <property type="entry name" value="Polycomb group ring finger 2"/>
    <property type="match status" value="1"/>
</dbReference>
<dbReference type="Gene3D" id="3.10.20.90">
    <property type="entry name" value="Phosphatidylinositol 3-kinase Catalytic Subunit, Chain A, domain 1"/>
    <property type="match status" value="1"/>
</dbReference>
<dbReference type="Gene3D" id="3.30.40.10">
    <property type="entry name" value="Zinc/RING finger domain, C3HC4 (zinc finger)"/>
    <property type="match status" value="1"/>
</dbReference>
<dbReference type="InterPro" id="IPR032443">
    <property type="entry name" value="RAWUL"/>
</dbReference>
<dbReference type="InterPro" id="IPR001841">
    <property type="entry name" value="Znf_RING"/>
</dbReference>
<dbReference type="InterPro" id="IPR013083">
    <property type="entry name" value="Znf_RING/FYVE/PHD"/>
</dbReference>
<dbReference type="InterPro" id="IPR017907">
    <property type="entry name" value="Znf_RING_CS"/>
</dbReference>
<dbReference type="PANTHER" id="PTHR10825:SF21">
    <property type="entry name" value="POLYCOMB COMPLEX PROTEIN BMI-1"/>
    <property type="match status" value="1"/>
</dbReference>
<dbReference type="PANTHER" id="PTHR10825">
    <property type="entry name" value="RING FINGER DOMAIN-CONTAINING, POLYCOMB GROUP COMPONENT"/>
    <property type="match status" value="1"/>
</dbReference>
<dbReference type="Pfam" id="PF16207">
    <property type="entry name" value="RAWUL"/>
    <property type="match status" value="1"/>
</dbReference>
<dbReference type="Pfam" id="PF13923">
    <property type="entry name" value="zf-C3HC4_2"/>
    <property type="match status" value="1"/>
</dbReference>
<dbReference type="SMART" id="SM00184">
    <property type="entry name" value="RING"/>
    <property type="match status" value="1"/>
</dbReference>
<dbReference type="SUPFAM" id="SSF57850">
    <property type="entry name" value="RING/U-box"/>
    <property type="match status" value="1"/>
</dbReference>
<dbReference type="PROSITE" id="PS00518">
    <property type="entry name" value="ZF_RING_1"/>
    <property type="match status" value="1"/>
</dbReference>
<dbReference type="PROSITE" id="PS50089">
    <property type="entry name" value="ZF_RING_2"/>
    <property type="match status" value="1"/>
</dbReference>
<reference key="1">
    <citation type="journal article" date="2002" name="Biochem. Biophys. Res. Commun.">
        <title>pc1 and psc1, zebrafish homologs of Drosophila Polycomb and Posterior sex combs, encode nuclear proteins capable of complex interactions.</title>
        <authorList>
            <person name="Kawamura A."/>
            <person name="Yokota S."/>
            <person name="Yamada K."/>
            <person name="Inoue H."/>
            <person name="Inohaya K."/>
            <person name="Yamazaki K."/>
            <person name="Yasumasu I."/>
            <person name="Higashinakagawa T."/>
        </authorList>
    </citation>
    <scope>NUCLEOTIDE SEQUENCE [MRNA]</scope>
    <scope>INTERACTION WITH CBX2</scope>
    <scope>DEVELOPMENTAL STAGE</scope>
    <scope>SUBCELLULAR LOCATION</scope>
</reference>
<reference key="2">
    <citation type="submission" date="2003-03" db="EMBL/GenBank/DDBJ databases">
        <authorList>
            <consortium name="NIH - Zebrafish Gene Collection (ZGC) project"/>
        </authorList>
    </citation>
    <scope>NUCLEOTIDE SEQUENCE [LARGE SCALE MRNA]</scope>
    <source>
        <tissue>Embryo</tissue>
    </source>
</reference>
<feature type="chain" id="PRO_0000296630" description="Polycomb complex protein BMI-1-A">
    <location>
        <begin position="1"/>
        <end position="320"/>
    </location>
</feature>
<feature type="zinc finger region" description="RING-type" evidence="3">
    <location>
        <begin position="18"/>
        <end position="57"/>
    </location>
</feature>
<feature type="region of interest" description="Disordered" evidence="4">
    <location>
        <begin position="234"/>
        <end position="320"/>
    </location>
</feature>
<feature type="short sequence motif" description="Nuclear localization signal" evidence="2">
    <location>
        <begin position="81"/>
        <end position="95"/>
    </location>
</feature>
<feature type="compositionally biased region" description="Low complexity" evidence="4">
    <location>
        <begin position="262"/>
        <end position="281"/>
    </location>
</feature>
<feature type="compositionally biased region" description="Polar residues" evidence="4">
    <location>
        <begin position="285"/>
        <end position="304"/>
    </location>
</feature>
<comment type="function">
    <text evidence="1">Component of a Polycomb group (PcG) multiprotein PRC1-like complex, a complex class required to maintain the transcriptionally repressive state of many genes, including Hox genes, throughout development. PcG PRC1 complex acts via chromatin remodeling and modification of histones; it mediates monoubiquitination of histone H2A 'Lys-119', rendering chromatin heritably changed in its expressibility. In the PRC1 complex, it is required to stimulate the E3 ubiquitin-protein ligase activity of rnf2.</text>
</comment>
<comment type="subunit">
    <text evidence="1 5">Component of a PRC1-like complex (By similarity). Homodimer. Interacts with cbx2.</text>
</comment>
<comment type="subcellular location">
    <subcellularLocation>
        <location evidence="5">Nucleus</location>
    </subcellularLocation>
</comment>
<comment type="developmental stage">
    <text evidence="5">Maternally derived transcript is detected at high levels at 1 and 3 hours post-fertilization (hpf). Not detectable at 6 and 9 hpf. Detected at intermediate levels at 12 and 15 hpf. Highly expressed at 18 and 24 hpf, after which expression decreases again. Detected in the anterior embryo at the 6 somites stage. Detected in hindbrain, rhombomeres and telencephalon at the 18 somites stage. Restricted to the anterior embryo, including brain, otic vesicles, and optic stalks in 24 hpf embryo. Detected in pectoral fin buds in 48 hpf embryo.</text>
</comment>
<comment type="sequence caution" evidence="6">
    <conflict type="erroneous initiation">
        <sequence resource="EMBL-CDS" id="BAC01266"/>
    </conflict>
</comment>
<sequence length="320" mass="36539">MHRTTRIKITELNPHLMCVLCGGYFIDATTIIECLHSFCKMCIVRYLETSKYCPICDVQVHKTKPLLNIRSDKTLQDIVYKLVPGLFKNEMKRRRDFYAEHPSVDAANGSNEDRGEVADEDKRIITDDEIISLSIEFFDHRAQQQGCTEERQKEEVNNKRYLQCPAAMTVMHLRKFLRSKMDIPPTYQIEVMYEDEPLKDYYTLMDIAYIYTWRRNGPLPLKYRVRPSCKKMKITHPQEGLNNANRSESDSASDKACSPAGVPSTSSPLPSPSTLVQPSQPHFTHISSPINGTTMTSPNRQFNFSKVRKSALNGSSTSSG</sequence>
<proteinExistence type="evidence at protein level"/>
<name>BMI1A_DANRE</name>
<organism>
    <name type="scientific">Danio rerio</name>
    <name type="common">Zebrafish</name>
    <name type="synonym">Brachydanio rerio</name>
    <dbReference type="NCBI Taxonomy" id="7955"/>
    <lineage>
        <taxon>Eukaryota</taxon>
        <taxon>Metazoa</taxon>
        <taxon>Chordata</taxon>
        <taxon>Craniata</taxon>
        <taxon>Vertebrata</taxon>
        <taxon>Euteleostomi</taxon>
        <taxon>Actinopterygii</taxon>
        <taxon>Neopterygii</taxon>
        <taxon>Teleostei</taxon>
        <taxon>Ostariophysi</taxon>
        <taxon>Cypriniformes</taxon>
        <taxon>Danionidae</taxon>
        <taxon>Danioninae</taxon>
        <taxon>Danio</taxon>
    </lineage>
</organism>
<protein>
    <recommendedName>
        <fullName>Polycomb complex protein BMI-1-A</fullName>
    </recommendedName>
    <alternativeName>
        <fullName>Polycomb group RING finger protein 4-A</fullName>
    </alternativeName>
</protein>